<gene>
    <name evidence="1" type="primary">rpsM1</name>
    <name type="ordered locus">Ping_2611</name>
</gene>
<gene>
    <name evidence="1" type="primary">rpsM2</name>
    <name type="ordered locus">Ping_3502</name>
</gene>
<keyword id="KW-1185">Reference proteome</keyword>
<keyword id="KW-0687">Ribonucleoprotein</keyword>
<keyword id="KW-0689">Ribosomal protein</keyword>
<keyword id="KW-0694">RNA-binding</keyword>
<keyword id="KW-0699">rRNA-binding</keyword>
<keyword id="KW-0820">tRNA-binding</keyword>
<feature type="chain" id="PRO_0000306684" description="Small ribosomal subunit protein uS13">
    <location>
        <begin position="1"/>
        <end position="118"/>
    </location>
</feature>
<feature type="region of interest" description="Disordered" evidence="2">
    <location>
        <begin position="94"/>
        <end position="118"/>
    </location>
</feature>
<comment type="function">
    <text evidence="1">Located at the top of the head of the 30S subunit, it contacts several helices of the 16S rRNA. In the 70S ribosome it contacts the 23S rRNA (bridge B1a) and protein L5 of the 50S subunit (bridge B1b), connecting the 2 subunits; these bridges are implicated in subunit movement. Contacts the tRNAs in the A and P-sites.</text>
</comment>
<comment type="subunit">
    <text evidence="1">Part of the 30S ribosomal subunit. Forms a loose heterodimer with protein S19. Forms two bridges to the 50S subunit in the 70S ribosome.</text>
</comment>
<comment type="similarity">
    <text evidence="1">Belongs to the universal ribosomal protein uS13 family.</text>
</comment>
<evidence type="ECO:0000255" key="1">
    <source>
        <dbReference type="HAMAP-Rule" id="MF_01315"/>
    </source>
</evidence>
<evidence type="ECO:0000256" key="2">
    <source>
        <dbReference type="SAM" id="MobiDB-lite"/>
    </source>
</evidence>
<evidence type="ECO:0000305" key="3"/>
<accession>A1SXW5</accession>
<sequence>MARIAGINVPDHKHAVIALTAIFGIGKTRSQIICAASGIAESTKLKDLDETQIEALRTEVATFTVEGDLRREVSMNIKRLMDLGCYRGLRHRRSLPVRGQRSKTNARTRKGPRKAIKK</sequence>
<protein>
    <recommendedName>
        <fullName evidence="1">Small ribosomal subunit protein uS13</fullName>
    </recommendedName>
    <alternativeName>
        <fullName evidence="3">30S ribosomal protein S13</fullName>
    </alternativeName>
</protein>
<dbReference type="EMBL" id="CP000510">
    <property type="protein sequence ID" value="ABM04330.1"/>
    <property type="molecule type" value="Genomic_DNA"/>
</dbReference>
<dbReference type="EMBL" id="CP000510">
    <property type="protein sequence ID" value="ABM05185.1"/>
    <property type="molecule type" value="Genomic_DNA"/>
</dbReference>
<dbReference type="RefSeq" id="WP_011770887.1">
    <property type="nucleotide sequence ID" value="NC_008709.1"/>
</dbReference>
<dbReference type="SMR" id="A1SXW5"/>
<dbReference type="STRING" id="357804.Ping_2611"/>
<dbReference type="KEGG" id="pin:Ping_2611"/>
<dbReference type="KEGG" id="pin:Ping_3502"/>
<dbReference type="eggNOG" id="COG0099">
    <property type="taxonomic scope" value="Bacteria"/>
</dbReference>
<dbReference type="HOGENOM" id="CLU_103849_1_2_6"/>
<dbReference type="OrthoDB" id="9803610at2"/>
<dbReference type="Proteomes" id="UP000000639">
    <property type="component" value="Chromosome"/>
</dbReference>
<dbReference type="GO" id="GO:0005829">
    <property type="term" value="C:cytosol"/>
    <property type="evidence" value="ECO:0007669"/>
    <property type="project" value="TreeGrafter"/>
</dbReference>
<dbReference type="GO" id="GO:0015935">
    <property type="term" value="C:small ribosomal subunit"/>
    <property type="evidence" value="ECO:0007669"/>
    <property type="project" value="TreeGrafter"/>
</dbReference>
<dbReference type="GO" id="GO:0019843">
    <property type="term" value="F:rRNA binding"/>
    <property type="evidence" value="ECO:0007669"/>
    <property type="project" value="UniProtKB-UniRule"/>
</dbReference>
<dbReference type="GO" id="GO:0003735">
    <property type="term" value="F:structural constituent of ribosome"/>
    <property type="evidence" value="ECO:0007669"/>
    <property type="project" value="InterPro"/>
</dbReference>
<dbReference type="GO" id="GO:0000049">
    <property type="term" value="F:tRNA binding"/>
    <property type="evidence" value="ECO:0007669"/>
    <property type="project" value="UniProtKB-UniRule"/>
</dbReference>
<dbReference type="GO" id="GO:0006412">
    <property type="term" value="P:translation"/>
    <property type="evidence" value="ECO:0007669"/>
    <property type="project" value="UniProtKB-UniRule"/>
</dbReference>
<dbReference type="FunFam" id="1.10.8.50:FF:000001">
    <property type="entry name" value="30S ribosomal protein S13"/>
    <property type="match status" value="1"/>
</dbReference>
<dbReference type="FunFam" id="4.10.910.10:FF:000001">
    <property type="entry name" value="30S ribosomal protein S13"/>
    <property type="match status" value="1"/>
</dbReference>
<dbReference type="Gene3D" id="1.10.8.50">
    <property type="match status" value="1"/>
</dbReference>
<dbReference type="Gene3D" id="4.10.910.10">
    <property type="entry name" value="30s ribosomal protein s13, domain 2"/>
    <property type="match status" value="1"/>
</dbReference>
<dbReference type="HAMAP" id="MF_01315">
    <property type="entry name" value="Ribosomal_uS13"/>
    <property type="match status" value="1"/>
</dbReference>
<dbReference type="InterPro" id="IPR027437">
    <property type="entry name" value="Rbsml_uS13_C"/>
</dbReference>
<dbReference type="InterPro" id="IPR001892">
    <property type="entry name" value="Ribosomal_uS13"/>
</dbReference>
<dbReference type="InterPro" id="IPR010979">
    <property type="entry name" value="Ribosomal_uS13-like_H2TH"/>
</dbReference>
<dbReference type="InterPro" id="IPR019980">
    <property type="entry name" value="Ribosomal_uS13_bac-type"/>
</dbReference>
<dbReference type="InterPro" id="IPR018269">
    <property type="entry name" value="Ribosomal_uS13_CS"/>
</dbReference>
<dbReference type="NCBIfam" id="TIGR03631">
    <property type="entry name" value="uS13_bact"/>
    <property type="match status" value="1"/>
</dbReference>
<dbReference type="PANTHER" id="PTHR10871">
    <property type="entry name" value="30S RIBOSOMAL PROTEIN S13/40S RIBOSOMAL PROTEIN S18"/>
    <property type="match status" value="1"/>
</dbReference>
<dbReference type="PANTHER" id="PTHR10871:SF1">
    <property type="entry name" value="SMALL RIBOSOMAL SUBUNIT PROTEIN US13M"/>
    <property type="match status" value="1"/>
</dbReference>
<dbReference type="Pfam" id="PF00416">
    <property type="entry name" value="Ribosomal_S13"/>
    <property type="match status" value="1"/>
</dbReference>
<dbReference type="PIRSF" id="PIRSF002134">
    <property type="entry name" value="Ribosomal_S13"/>
    <property type="match status" value="1"/>
</dbReference>
<dbReference type="SUPFAM" id="SSF46946">
    <property type="entry name" value="S13-like H2TH domain"/>
    <property type="match status" value="1"/>
</dbReference>
<dbReference type="PROSITE" id="PS00646">
    <property type="entry name" value="RIBOSOMAL_S13_1"/>
    <property type="match status" value="1"/>
</dbReference>
<dbReference type="PROSITE" id="PS50159">
    <property type="entry name" value="RIBOSOMAL_S13_2"/>
    <property type="match status" value="1"/>
</dbReference>
<organism>
    <name type="scientific">Psychromonas ingrahamii (strain DSM 17664 / CCUG 51855 / 37)</name>
    <dbReference type="NCBI Taxonomy" id="357804"/>
    <lineage>
        <taxon>Bacteria</taxon>
        <taxon>Pseudomonadati</taxon>
        <taxon>Pseudomonadota</taxon>
        <taxon>Gammaproteobacteria</taxon>
        <taxon>Alteromonadales</taxon>
        <taxon>Psychromonadaceae</taxon>
        <taxon>Psychromonas</taxon>
    </lineage>
</organism>
<name>RS13_PSYIN</name>
<reference key="1">
    <citation type="journal article" date="2008" name="BMC Genomics">
        <title>Genomics of an extreme psychrophile, Psychromonas ingrahamii.</title>
        <authorList>
            <person name="Riley M."/>
            <person name="Staley J.T."/>
            <person name="Danchin A."/>
            <person name="Wang T.Z."/>
            <person name="Brettin T.S."/>
            <person name="Hauser L.J."/>
            <person name="Land M.L."/>
            <person name="Thompson L.S."/>
        </authorList>
    </citation>
    <scope>NUCLEOTIDE SEQUENCE [LARGE SCALE GENOMIC DNA]</scope>
    <source>
        <strain>DSM 17664 / CCUG 51855 / 37</strain>
    </source>
</reference>
<proteinExistence type="inferred from homology"/>